<reference key="1">
    <citation type="journal article" date="2001" name="Science">
        <title>Comparative genomics of Listeria species.</title>
        <authorList>
            <person name="Glaser P."/>
            <person name="Frangeul L."/>
            <person name="Buchrieser C."/>
            <person name="Rusniok C."/>
            <person name="Amend A."/>
            <person name="Baquero F."/>
            <person name="Berche P."/>
            <person name="Bloecker H."/>
            <person name="Brandt P."/>
            <person name="Chakraborty T."/>
            <person name="Charbit A."/>
            <person name="Chetouani F."/>
            <person name="Couve E."/>
            <person name="de Daruvar A."/>
            <person name="Dehoux P."/>
            <person name="Domann E."/>
            <person name="Dominguez-Bernal G."/>
            <person name="Duchaud E."/>
            <person name="Durant L."/>
            <person name="Dussurget O."/>
            <person name="Entian K.-D."/>
            <person name="Fsihi H."/>
            <person name="Garcia-del Portillo F."/>
            <person name="Garrido P."/>
            <person name="Gautier L."/>
            <person name="Goebel W."/>
            <person name="Gomez-Lopez N."/>
            <person name="Hain T."/>
            <person name="Hauf J."/>
            <person name="Jackson D."/>
            <person name="Jones L.-M."/>
            <person name="Kaerst U."/>
            <person name="Kreft J."/>
            <person name="Kuhn M."/>
            <person name="Kunst F."/>
            <person name="Kurapkat G."/>
            <person name="Madueno E."/>
            <person name="Maitournam A."/>
            <person name="Mata Vicente J."/>
            <person name="Ng E."/>
            <person name="Nedjari H."/>
            <person name="Nordsiek G."/>
            <person name="Novella S."/>
            <person name="de Pablos B."/>
            <person name="Perez-Diaz J.-C."/>
            <person name="Purcell R."/>
            <person name="Remmel B."/>
            <person name="Rose M."/>
            <person name="Schlueter T."/>
            <person name="Simoes N."/>
            <person name="Tierrez A."/>
            <person name="Vazquez-Boland J.-A."/>
            <person name="Voss H."/>
            <person name="Wehland J."/>
            <person name="Cossart P."/>
        </authorList>
    </citation>
    <scope>NUCLEOTIDE SEQUENCE [LARGE SCALE GENOMIC DNA]</scope>
    <source>
        <strain>ATCC BAA-679 / EGD-e</strain>
    </source>
</reference>
<evidence type="ECO:0000255" key="1">
    <source>
        <dbReference type="HAMAP-Rule" id="MF_01615"/>
    </source>
</evidence>
<protein>
    <recommendedName>
        <fullName evidence="1">Pyridoxal 5'-phosphate synthase subunit PdxT</fullName>
        <ecNumber evidence="1">4.3.3.6</ecNumber>
    </recommendedName>
    <alternativeName>
        <fullName evidence="1">Pdx2</fullName>
    </alternativeName>
    <alternativeName>
        <fullName evidence="1">Pyridoxal 5'-phosphate synthase glutaminase subunit</fullName>
        <ecNumber evidence="1">3.5.1.2</ecNumber>
    </alternativeName>
</protein>
<dbReference type="EC" id="4.3.3.6" evidence="1"/>
<dbReference type="EC" id="3.5.1.2" evidence="1"/>
<dbReference type="EMBL" id="AL591982">
    <property type="protein sequence ID" value="CAD00180.1"/>
    <property type="molecule type" value="Genomic_DNA"/>
</dbReference>
<dbReference type="PIR" id="AF1337">
    <property type="entry name" value="AF1337"/>
</dbReference>
<dbReference type="RefSeq" id="NP_465626.1">
    <property type="nucleotide sequence ID" value="NC_003210.1"/>
</dbReference>
<dbReference type="RefSeq" id="WP_009932189.1">
    <property type="nucleotide sequence ID" value="NZ_CP149495.1"/>
</dbReference>
<dbReference type="SMR" id="Q8Y5G1"/>
<dbReference type="STRING" id="169963.gene:17594788"/>
<dbReference type="PaxDb" id="169963-lmo2102"/>
<dbReference type="EnsemblBacteria" id="CAD00180">
    <property type="protein sequence ID" value="CAD00180"/>
    <property type="gene ID" value="CAD00180"/>
</dbReference>
<dbReference type="GeneID" id="984751"/>
<dbReference type="KEGG" id="lmo:lmo2102"/>
<dbReference type="PATRIC" id="fig|169963.11.peg.2153"/>
<dbReference type="eggNOG" id="COG0311">
    <property type="taxonomic scope" value="Bacteria"/>
</dbReference>
<dbReference type="HOGENOM" id="CLU_069674_2_0_9"/>
<dbReference type="OrthoDB" id="9810320at2"/>
<dbReference type="PhylomeDB" id="Q8Y5G1"/>
<dbReference type="BioCyc" id="LMON169963:LMO2102-MONOMER"/>
<dbReference type="UniPathway" id="UPA00245"/>
<dbReference type="Proteomes" id="UP000000817">
    <property type="component" value="Chromosome"/>
</dbReference>
<dbReference type="GO" id="GO:0005829">
    <property type="term" value="C:cytosol"/>
    <property type="evidence" value="ECO:0000318"/>
    <property type="project" value="GO_Central"/>
</dbReference>
<dbReference type="GO" id="GO:1903600">
    <property type="term" value="C:glutaminase complex"/>
    <property type="evidence" value="ECO:0000318"/>
    <property type="project" value="GO_Central"/>
</dbReference>
<dbReference type="GO" id="GO:0004359">
    <property type="term" value="F:glutaminase activity"/>
    <property type="evidence" value="ECO:0007669"/>
    <property type="project" value="UniProtKB-UniRule"/>
</dbReference>
<dbReference type="GO" id="GO:0036381">
    <property type="term" value="F:pyridoxal 5'-phosphate synthase (glutamine hydrolysing) activity"/>
    <property type="evidence" value="ECO:0007669"/>
    <property type="project" value="UniProtKB-UniRule"/>
</dbReference>
<dbReference type="GO" id="GO:0006543">
    <property type="term" value="P:glutamine catabolic process"/>
    <property type="evidence" value="ECO:0007669"/>
    <property type="project" value="UniProtKB-UniRule"/>
</dbReference>
<dbReference type="GO" id="GO:0042823">
    <property type="term" value="P:pyridoxal phosphate biosynthetic process"/>
    <property type="evidence" value="ECO:0000318"/>
    <property type="project" value="GO_Central"/>
</dbReference>
<dbReference type="GO" id="GO:0008614">
    <property type="term" value="P:pyridoxine metabolic process"/>
    <property type="evidence" value="ECO:0000318"/>
    <property type="project" value="GO_Central"/>
</dbReference>
<dbReference type="CDD" id="cd01749">
    <property type="entry name" value="GATase1_PB"/>
    <property type="match status" value="1"/>
</dbReference>
<dbReference type="FunFam" id="3.40.50.880:FF:000010">
    <property type="entry name" value="uncharacterized protein LOC100176842 isoform X2"/>
    <property type="match status" value="1"/>
</dbReference>
<dbReference type="Gene3D" id="3.40.50.880">
    <property type="match status" value="1"/>
</dbReference>
<dbReference type="HAMAP" id="MF_01615">
    <property type="entry name" value="PdxT"/>
    <property type="match status" value="1"/>
</dbReference>
<dbReference type="InterPro" id="IPR029062">
    <property type="entry name" value="Class_I_gatase-like"/>
</dbReference>
<dbReference type="InterPro" id="IPR002161">
    <property type="entry name" value="PdxT/SNO"/>
</dbReference>
<dbReference type="InterPro" id="IPR021196">
    <property type="entry name" value="PdxT/SNO_CS"/>
</dbReference>
<dbReference type="NCBIfam" id="TIGR03800">
    <property type="entry name" value="PLP_synth_Pdx2"/>
    <property type="match status" value="1"/>
</dbReference>
<dbReference type="PANTHER" id="PTHR31559">
    <property type="entry name" value="PYRIDOXAL 5'-PHOSPHATE SYNTHASE SUBUNIT SNO"/>
    <property type="match status" value="1"/>
</dbReference>
<dbReference type="PANTHER" id="PTHR31559:SF0">
    <property type="entry name" value="PYRIDOXAL 5'-PHOSPHATE SYNTHASE SUBUNIT SNO1-RELATED"/>
    <property type="match status" value="1"/>
</dbReference>
<dbReference type="Pfam" id="PF01174">
    <property type="entry name" value="SNO"/>
    <property type="match status" value="1"/>
</dbReference>
<dbReference type="PIRSF" id="PIRSF005639">
    <property type="entry name" value="Glut_amidoT_SNO"/>
    <property type="match status" value="1"/>
</dbReference>
<dbReference type="SUPFAM" id="SSF52317">
    <property type="entry name" value="Class I glutamine amidotransferase-like"/>
    <property type="match status" value="1"/>
</dbReference>
<dbReference type="PROSITE" id="PS01236">
    <property type="entry name" value="PDXT_SNO_1"/>
    <property type="match status" value="1"/>
</dbReference>
<dbReference type="PROSITE" id="PS51130">
    <property type="entry name" value="PDXT_SNO_2"/>
    <property type="match status" value="1"/>
</dbReference>
<gene>
    <name evidence="1" type="primary">pdxT</name>
    <name type="ordered locus">lmo2102</name>
</gene>
<feature type="chain" id="PRO_0000135645" description="Pyridoxal 5'-phosphate synthase subunit PdxT">
    <location>
        <begin position="1"/>
        <end position="188"/>
    </location>
</feature>
<feature type="active site" description="Nucleophile" evidence="1">
    <location>
        <position position="79"/>
    </location>
</feature>
<feature type="active site" description="Charge relay system" evidence="1">
    <location>
        <position position="170"/>
    </location>
</feature>
<feature type="active site" description="Charge relay system" evidence="1">
    <location>
        <position position="172"/>
    </location>
</feature>
<feature type="binding site" evidence="1">
    <location>
        <begin position="47"/>
        <end position="49"/>
    </location>
    <ligand>
        <name>L-glutamine</name>
        <dbReference type="ChEBI" id="CHEBI:58359"/>
    </ligand>
</feature>
<feature type="binding site" evidence="1">
    <location>
        <position position="105"/>
    </location>
    <ligand>
        <name>L-glutamine</name>
        <dbReference type="ChEBI" id="CHEBI:58359"/>
    </ligand>
</feature>
<feature type="binding site" evidence="1">
    <location>
        <begin position="134"/>
        <end position="135"/>
    </location>
    <ligand>
        <name>L-glutamine</name>
        <dbReference type="ChEBI" id="CHEBI:58359"/>
    </ligand>
</feature>
<accession>Q8Y5G1</accession>
<comment type="function">
    <text evidence="1">Catalyzes the hydrolysis of glutamine to glutamate and ammonia as part of the biosynthesis of pyridoxal 5'-phosphate. The resulting ammonia molecule is channeled to the active site of PdxS.</text>
</comment>
<comment type="catalytic activity">
    <reaction evidence="1">
        <text>aldehydo-D-ribose 5-phosphate + D-glyceraldehyde 3-phosphate + L-glutamine = pyridoxal 5'-phosphate + L-glutamate + phosphate + 3 H2O + H(+)</text>
        <dbReference type="Rhea" id="RHEA:31507"/>
        <dbReference type="ChEBI" id="CHEBI:15377"/>
        <dbReference type="ChEBI" id="CHEBI:15378"/>
        <dbReference type="ChEBI" id="CHEBI:29985"/>
        <dbReference type="ChEBI" id="CHEBI:43474"/>
        <dbReference type="ChEBI" id="CHEBI:58273"/>
        <dbReference type="ChEBI" id="CHEBI:58359"/>
        <dbReference type="ChEBI" id="CHEBI:59776"/>
        <dbReference type="ChEBI" id="CHEBI:597326"/>
        <dbReference type="EC" id="4.3.3.6"/>
    </reaction>
</comment>
<comment type="catalytic activity">
    <reaction evidence="1">
        <text>L-glutamine + H2O = L-glutamate + NH4(+)</text>
        <dbReference type="Rhea" id="RHEA:15889"/>
        <dbReference type="ChEBI" id="CHEBI:15377"/>
        <dbReference type="ChEBI" id="CHEBI:28938"/>
        <dbReference type="ChEBI" id="CHEBI:29985"/>
        <dbReference type="ChEBI" id="CHEBI:58359"/>
        <dbReference type="EC" id="3.5.1.2"/>
    </reaction>
</comment>
<comment type="pathway">
    <text evidence="1">Cofactor biosynthesis; pyridoxal 5'-phosphate biosynthesis.</text>
</comment>
<comment type="subunit">
    <text evidence="1">In the presence of PdxS, forms a dodecamer of heterodimers. Only shows activity in the heterodimer.</text>
</comment>
<comment type="similarity">
    <text evidence="1">Belongs to the glutaminase PdxT/SNO family.</text>
</comment>
<name>PDXT_LISMO</name>
<keyword id="KW-0315">Glutamine amidotransferase</keyword>
<keyword id="KW-0378">Hydrolase</keyword>
<keyword id="KW-0456">Lyase</keyword>
<keyword id="KW-0663">Pyridoxal phosphate</keyword>
<keyword id="KW-1185">Reference proteome</keyword>
<proteinExistence type="inferred from homology"/>
<sequence>MKKIGVLAIQGAVDEHIQMIESAGALAFKVKHSNDLAGLDGLVLPGGESTTMRKIMKRYDLMEPVKAFASKGKAIFGTCAGLVLLSKEIEGGEESLGLIEATAIRNGFGRQKESFEAELNVEAFGEPAFEAIFIRAPYLIEPSNEVAVLATVENRIVAAKQANILVTAFHPELTNDNRWMNYFLEKMV</sequence>
<organism>
    <name type="scientific">Listeria monocytogenes serovar 1/2a (strain ATCC BAA-679 / EGD-e)</name>
    <dbReference type="NCBI Taxonomy" id="169963"/>
    <lineage>
        <taxon>Bacteria</taxon>
        <taxon>Bacillati</taxon>
        <taxon>Bacillota</taxon>
        <taxon>Bacilli</taxon>
        <taxon>Bacillales</taxon>
        <taxon>Listeriaceae</taxon>
        <taxon>Listeria</taxon>
    </lineage>
</organism>